<evidence type="ECO:0000255" key="1">
    <source>
        <dbReference type="PROSITE-ProRule" id="PRU00701"/>
    </source>
</evidence>
<evidence type="ECO:0000255" key="2">
    <source>
        <dbReference type="PROSITE-ProRule" id="PRU00702"/>
    </source>
</evidence>
<evidence type="ECO:0000256" key="3">
    <source>
        <dbReference type="SAM" id="MobiDB-lite"/>
    </source>
</evidence>
<evidence type="ECO:0000269" key="4">
    <source>
    </source>
</evidence>
<evidence type="ECO:0000269" key="5">
    <source>
    </source>
</evidence>
<evidence type="ECO:0000269" key="6">
    <source>
    </source>
</evidence>
<evidence type="ECO:0000303" key="7">
    <source>
    </source>
</evidence>
<evidence type="ECO:0000305" key="8"/>
<evidence type="ECO:0000312" key="9">
    <source>
        <dbReference type="Araport" id="AT3G18550"/>
    </source>
</evidence>
<evidence type="ECO:0000312" key="10">
    <source>
        <dbReference type="EMBL" id="BAB02213.1"/>
    </source>
</evidence>
<comment type="function">
    <text evidence="4 5 6">Transcription factor that prevents axillary bud outgrowth and delays early axillary bud development (PubMed:17307924, PubMed:17452340, PubMed:30865619). Indirectly required for the auxin-induced control of apical dominance (PubMed:17307924, PubMed:17452340).</text>
</comment>
<comment type="interaction">
    <interactant intactId="EBI-15192731">
        <id>A1YKT1</id>
    </interactant>
    <interactant intactId="EBI-15192535">
        <id>F4JI72</id>
        <label>At4g03250</label>
    </interactant>
    <organismsDiffer>false</organismsDiffer>
    <experiments>4</experiments>
</comment>
<comment type="interaction">
    <interactant intactId="EBI-15192731">
        <id>A1YKT1</id>
    </interactant>
    <interactant intactId="EBI-15191587">
        <id>F4K1A8</id>
        <label>At5g26749</label>
    </interactant>
    <organismsDiffer>false</organismsDiffer>
    <experiments>3</experiments>
</comment>
<comment type="interaction">
    <interactant intactId="EBI-15192731">
        <id>A1YKT1</id>
    </interactant>
    <interactant intactId="EBI-1237855">
        <id>Q9FMC2</id>
        <label>BZIP43</label>
    </interactant>
    <organismsDiffer>false</organismsDiffer>
    <experiments>3</experiments>
</comment>
<comment type="interaction">
    <interactant intactId="EBI-15192731">
        <id>A1YKT1</id>
    </interactant>
    <interactant intactId="EBI-2349513">
        <id>Q84MC7</id>
        <label>PYL9</label>
    </interactant>
    <organismsDiffer>false</organismsDiffer>
    <experiments>3</experiments>
</comment>
<comment type="interaction">
    <interactant intactId="EBI-15192731">
        <id>A1YKT1</id>
    </interactant>
    <interactant intactId="EBI-15194007">
        <id>F4K5X6</id>
        <label>RVE2</label>
    </interactant>
    <organismsDiffer>false</organismsDiffer>
    <experiments>3</experiments>
</comment>
<comment type="interaction">
    <interactant intactId="EBI-15192731">
        <id>A1YKT1</id>
    </interactant>
    <interactant intactId="EBI-4459694">
        <id>Q6X7J9</id>
        <label>WOX4</label>
    </interactant>
    <organismsDiffer>false</organismsDiffer>
    <experiments>3</experiments>
</comment>
<comment type="subcellular location">
    <subcellularLocation>
        <location evidence="1 4">Nucleus</location>
    </subcellularLocation>
</comment>
<comment type="alternative products">
    <event type="alternative splicing"/>
    <isoform>
        <id>A1YKT1-1</id>
        <name>1</name>
        <sequence type="displayed"/>
    </isoform>
    <isoform>
        <id>A1YKT1-2</id>
        <name>2</name>
        <sequence type="described" ref="VSP_033117"/>
    </isoform>
</comment>
<comment type="tissue specificity">
    <text evidence="4 5">Expressed in unelongated axillary buds, and, to a lower extent, in axillary structures such as flowers and siliques.</text>
</comment>
<comment type="developmental stage">
    <text evidence="4">Detected in axillary mersitems which appears in the axils of leaves after flowering. During bud vegetative development, down-regulated in the outer layers of the meristem, but accumulates transiently in young leaf primordia. In buds bearing flowers, restricted to the provascular tissue underlying the bud. Accumulates in axillary buds, but disappears at the time of bud outgrowth.</text>
</comment>
<comment type="induction">
    <text evidence="4">Induced during environmentally induced bud dormancy (planting density). Repressed transiently after shoot apical meristem (SAM) decapitation (release from apical dominance).</text>
</comment>
<comment type="disruption phenotype">
    <text evidence="6">Increased shoot branching but reduced response to strigolactone (e.g. GR24) (PubMed:30865619). The triple mutant brc1 brc2 abcb19 is insensitive to GR24 treatment but is partially restored with regard to shoot branching (PubMed:30865619).</text>
</comment>
<comment type="sequence caution" evidence="8">
    <conflict type="erroneous gene model prediction">
        <sequence resource="EMBL-CDS" id="BAB02213"/>
    </conflict>
</comment>
<name>TCP18_ARATH</name>
<organism>
    <name type="scientific">Arabidopsis thaliana</name>
    <name type="common">Mouse-ear cress</name>
    <dbReference type="NCBI Taxonomy" id="3702"/>
    <lineage>
        <taxon>Eukaryota</taxon>
        <taxon>Viridiplantae</taxon>
        <taxon>Streptophyta</taxon>
        <taxon>Embryophyta</taxon>
        <taxon>Tracheophyta</taxon>
        <taxon>Spermatophyta</taxon>
        <taxon>Magnoliopsida</taxon>
        <taxon>eudicotyledons</taxon>
        <taxon>Gunneridae</taxon>
        <taxon>Pentapetalae</taxon>
        <taxon>rosids</taxon>
        <taxon>malvids</taxon>
        <taxon>Brassicales</taxon>
        <taxon>Brassicaceae</taxon>
        <taxon>Camelineae</taxon>
        <taxon>Arabidopsis</taxon>
    </lineage>
</organism>
<feature type="chain" id="PRO_0000330792" description="Transcription factor TCP18">
    <location>
        <begin position="1"/>
        <end position="433"/>
    </location>
</feature>
<feature type="domain" description="TCP" evidence="1">
    <location>
        <begin position="148"/>
        <end position="206"/>
    </location>
</feature>
<feature type="domain" description="R" evidence="2">
    <location>
        <begin position="287"/>
        <end position="304"/>
    </location>
</feature>
<feature type="region of interest" description="Disordered" evidence="3">
    <location>
        <begin position="130"/>
        <end position="163"/>
    </location>
</feature>
<feature type="region of interest" description="Disordered" evidence="3">
    <location>
        <begin position="247"/>
        <end position="281"/>
    </location>
</feature>
<feature type="splice variant" id="VSP_033117" description="In isoform 2." evidence="7">
    <location>
        <begin position="226"/>
        <end position="229"/>
    </location>
</feature>
<dbReference type="EMBL" id="AM408560">
    <property type="protein sequence ID" value="CAL64010.1"/>
    <property type="molecule type" value="mRNA"/>
</dbReference>
<dbReference type="EMBL" id="EF062581">
    <property type="protein sequence ID" value="ABM05498.1"/>
    <property type="molecule type" value="mRNA"/>
</dbReference>
<dbReference type="EMBL" id="AP001303">
    <property type="protein sequence ID" value="BAB02213.1"/>
    <property type="status" value="ALT_SEQ"/>
    <property type="molecule type" value="Genomic_DNA"/>
</dbReference>
<dbReference type="EMBL" id="CP002686">
    <property type="protein sequence ID" value="AEE76115.1"/>
    <property type="molecule type" value="Genomic_DNA"/>
</dbReference>
<dbReference type="EMBL" id="CP002686">
    <property type="protein sequence ID" value="AEE76116.1"/>
    <property type="molecule type" value="Genomic_DNA"/>
</dbReference>
<dbReference type="EMBL" id="CP002686">
    <property type="protein sequence ID" value="ANM65598.1"/>
    <property type="molecule type" value="Genomic_DNA"/>
</dbReference>
<dbReference type="RefSeq" id="NP_001118656.1">
    <molecule id="A1YKT1-2"/>
    <property type="nucleotide sequence ID" value="NM_001125184.1"/>
</dbReference>
<dbReference type="RefSeq" id="NP_001319582.1">
    <molecule id="A1YKT1-1"/>
    <property type="nucleotide sequence ID" value="NM_001338345.1"/>
</dbReference>
<dbReference type="RefSeq" id="NP_188485.2">
    <molecule id="A1YKT1-1"/>
    <property type="nucleotide sequence ID" value="NM_112741.3"/>
</dbReference>
<dbReference type="SMR" id="A1YKT1"/>
<dbReference type="BioGRID" id="6719">
    <property type="interactions" value="73"/>
</dbReference>
<dbReference type="IntAct" id="A1YKT1">
    <property type="interactions" value="81"/>
</dbReference>
<dbReference type="STRING" id="3702.A1YKT1"/>
<dbReference type="PaxDb" id="3702-AT3G18550.1"/>
<dbReference type="EnsemblPlants" id="AT3G18550.1">
    <molecule id="A1YKT1-1"/>
    <property type="protein sequence ID" value="AT3G18550.1"/>
    <property type="gene ID" value="AT3G18550"/>
</dbReference>
<dbReference type="EnsemblPlants" id="AT3G18550.2">
    <molecule id="A1YKT1-2"/>
    <property type="protein sequence ID" value="AT3G18550.2"/>
    <property type="gene ID" value="AT3G18550"/>
</dbReference>
<dbReference type="EnsemblPlants" id="AT3G18550.4">
    <molecule id="A1YKT1-1"/>
    <property type="protein sequence ID" value="AT3G18550.4"/>
    <property type="gene ID" value="AT3G18550"/>
</dbReference>
<dbReference type="GeneID" id="821386"/>
<dbReference type="Gramene" id="AT3G18550.1">
    <molecule id="A1YKT1-1"/>
    <property type="protein sequence ID" value="AT3G18550.1"/>
    <property type="gene ID" value="AT3G18550"/>
</dbReference>
<dbReference type="Gramene" id="AT3G18550.2">
    <molecule id="A1YKT1-2"/>
    <property type="protein sequence ID" value="AT3G18550.2"/>
    <property type="gene ID" value="AT3G18550"/>
</dbReference>
<dbReference type="Gramene" id="AT3G18550.4">
    <molecule id="A1YKT1-1"/>
    <property type="protein sequence ID" value="AT3G18550.4"/>
    <property type="gene ID" value="AT3G18550"/>
</dbReference>
<dbReference type="KEGG" id="ath:AT3G18550"/>
<dbReference type="Araport" id="AT3G18550"/>
<dbReference type="TAIR" id="AT3G18550">
    <property type="gene designation" value="BRC1"/>
</dbReference>
<dbReference type="eggNOG" id="ENOG502QUQ6">
    <property type="taxonomic scope" value="Eukaryota"/>
</dbReference>
<dbReference type="InParanoid" id="A1YKT1"/>
<dbReference type="OMA" id="TITHIED"/>
<dbReference type="PRO" id="PR:A1YKT1"/>
<dbReference type="Proteomes" id="UP000006548">
    <property type="component" value="Chromosome 3"/>
</dbReference>
<dbReference type="ExpressionAtlas" id="A1YKT1">
    <property type="expression patterns" value="baseline and differential"/>
</dbReference>
<dbReference type="GO" id="GO:0005634">
    <property type="term" value="C:nucleus"/>
    <property type="evidence" value="ECO:0000314"/>
    <property type="project" value="TAIR"/>
</dbReference>
<dbReference type="GO" id="GO:0003700">
    <property type="term" value="F:DNA-binding transcription factor activity"/>
    <property type="evidence" value="ECO:0000250"/>
    <property type="project" value="TAIR"/>
</dbReference>
<dbReference type="GO" id="GO:0000976">
    <property type="term" value="F:transcription cis-regulatory region binding"/>
    <property type="evidence" value="ECO:0000353"/>
    <property type="project" value="TAIR"/>
</dbReference>
<dbReference type="GO" id="GO:0006355">
    <property type="term" value="P:regulation of DNA-templated transcription"/>
    <property type="evidence" value="ECO:0000304"/>
    <property type="project" value="TAIR"/>
</dbReference>
<dbReference type="GO" id="GO:2000032">
    <property type="term" value="P:regulation of secondary shoot formation"/>
    <property type="evidence" value="ECO:0000315"/>
    <property type="project" value="TAIR"/>
</dbReference>
<dbReference type="GO" id="GO:0010223">
    <property type="term" value="P:secondary shoot formation"/>
    <property type="evidence" value="ECO:0000315"/>
    <property type="project" value="CACAO"/>
</dbReference>
<dbReference type="InterPro" id="IPR017888">
    <property type="entry name" value="CYC/TB1_R_domain"/>
</dbReference>
<dbReference type="InterPro" id="IPR017887">
    <property type="entry name" value="TF_TCP_subgr"/>
</dbReference>
<dbReference type="InterPro" id="IPR005333">
    <property type="entry name" value="Transcription_factor_TCP"/>
</dbReference>
<dbReference type="PANTHER" id="PTHR31072:SF226">
    <property type="entry name" value="TRANSCRIPTION FACTOR TCP18"/>
    <property type="match status" value="1"/>
</dbReference>
<dbReference type="PANTHER" id="PTHR31072">
    <property type="entry name" value="TRANSCRIPTION FACTOR TCP4-RELATED"/>
    <property type="match status" value="1"/>
</dbReference>
<dbReference type="Pfam" id="PF03634">
    <property type="entry name" value="TCP"/>
    <property type="match status" value="1"/>
</dbReference>
<dbReference type="PROSITE" id="PS51370">
    <property type="entry name" value="R"/>
    <property type="match status" value="1"/>
</dbReference>
<dbReference type="PROSITE" id="PS51369">
    <property type="entry name" value="TCP"/>
    <property type="match status" value="1"/>
</dbReference>
<reference key="1">
    <citation type="journal article" date="2007" name="Plant Cell">
        <title>Arabidopsis BRANCHED1 acts as an integrator of branching signals within axillary buds.</title>
        <authorList>
            <person name="Aguilar-Martinez J.A."/>
            <person name="Poza-Carrion C."/>
            <person name="Cubas P."/>
        </authorList>
    </citation>
    <scope>NUCLEOTIDE SEQUENCE [MRNA] (ISOFORM 2)</scope>
    <scope>FUNCTION</scope>
    <scope>TISSUE SPECIFICITY</scope>
    <scope>DEVELOPMENTAL STAGE</scope>
    <scope>SUBCELLULAR LOCATION</scope>
    <scope>INDUCTION</scope>
    <scope>GENE FAMILY</scope>
    <scope>NOMENCLATURE</scope>
</reference>
<reference key="2">
    <citation type="journal article" date="2007" name="Plant Cell Physiol.">
        <title>Arabidopsis TEOSINTE BRANCHED1-LIKE 1 regulates axillary bud outgrowth and is homologous to monocot TEOSINTE BRANCHED1.</title>
        <authorList>
            <person name="Finlayson S.A."/>
        </authorList>
    </citation>
    <scope>NUCLEOTIDE SEQUENCE [MRNA] (ISOFORM 1)</scope>
    <scope>FUNCTION</scope>
    <scope>TISSUE SPECIFICITY</scope>
    <source>
        <strain>cv. Columbia</strain>
    </source>
</reference>
<reference key="3">
    <citation type="journal article" date="2000" name="DNA Res.">
        <title>Structural analysis of Arabidopsis thaliana chromosome 3. II. Sequence features of the 4,251,695 bp regions covered by 90 P1, TAC and BAC clones.</title>
        <authorList>
            <person name="Kaneko T."/>
            <person name="Katoh T."/>
            <person name="Sato S."/>
            <person name="Nakamura Y."/>
            <person name="Asamizu E."/>
            <person name="Tabata S."/>
        </authorList>
    </citation>
    <scope>NUCLEOTIDE SEQUENCE [LARGE SCALE GENOMIC DNA]</scope>
    <source>
        <strain>cv. Columbia</strain>
    </source>
</reference>
<reference key="4">
    <citation type="journal article" date="2017" name="Plant J.">
        <title>Araport11: a complete reannotation of the Arabidopsis thaliana reference genome.</title>
        <authorList>
            <person name="Cheng C.Y."/>
            <person name="Krishnakumar V."/>
            <person name="Chan A.P."/>
            <person name="Thibaud-Nissen F."/>
            <person name="Schobel S."/>
            <person name="Town C.D."/>
        </authorList>
    </citation>
    <scope>GENOME REANNOTATION</scope>
    <source>
        <strain>cv. Columbia</strain>
    </source>
</reference>
<reference key="5">
    <citation type="journal article" date="2019" name="PLoS Genet.">
        <title>Connective auxin transport contributes to strigolactone-mediated shoot branching control independent of the transcription factor BRC1.</title>
        <authorList>
            <person name="van Rongen M."/>
            <person name="Bennett T."/>
            <person name="Ticchiarelli F."/>
            <person name="Leyser O."/>
        </authorList>
    </citation>
    <scope>FUNCTION</scope>
    <scope>DISRUPTION PHENOTYPE</scope>
    <source>
        <strain>cv. Columbia</strain>
    </source>
</reference>
<gene>
    <name evidence="7" type="primary">TCP18</name>
    <name evidence="7" type="synonym">BRC1</name>
    <name type="synonym">TBL1</name>
    <name evidence="9" type="ordered locus">At3g18550</name>
    <name evidence="10" type="ORF">K24M9.4</name>
</gene>
<keyword id="KW-0025">Alternative splicing</keyword>
<keyword id="KW-0217">Developmental protein</keyword>
<keyword id="KW-0238">DNA-binding</keyword>
<keyword id="KW-0539">Nucleus</keyword>
<keyword id="KW-1185">Reference proteome</keyword>
<keyword id="KW-0804">Transcription</keyword>
<keyword id="KW-0805">Transcription regulation</keyword>
<proteinExistence type="evidence at protein level"/>
<accession>A1YKT1</accession>
<accession>A0AQW3</accession>
<accession>Q9LII4</accession>
<sequence length="433" mass="49676">MNNNIFSTTTTINDDYMLFPYNDHYSSQPLLPFSPSSSINDILIHSTSNTSNNHLDHHHQFQQPSPFSHFEFAPDCALLTSFHPENNGHDDNQTIPNDNHHPSLHFPLNNTIVEQPTEPSETINLIEDSQRISTSQDPKMKKAKKPSRTDRHSKIKTAKGTRDRRMRLSLDVAKELFGLQDMLGFDKASKTVEWLLTQAKPEIIKIATTLSHHGCFSSGDESHIRPVLGSMDTSSDLCELASMWTVDDRGSNTNTTETRGNKVDGRSMRGKRKRPEPRTPILKKLSKEERAKARERAKGRTMEKMMMKMKGRSQLVKVVEEDAHDHGEIIKNNNRSQVNRSSFEMTHCEDKIEELCKNDRFAVCNEFIMNKKDHISNESYDLVNYKPNSSFPVINHHRSQGAANSIEQHQFTDLHYSFGAKPRDLMHNYQNMY</sequence>
<protein>
    <recommendedName>
        <fullName evidence="7">Transcription factor TCP18</fullName>
    </recommendedName>
    <alternativeName>
        <fullName evidence="7">Protein BRANCHED 1</fullName>
    </alternativeName>
    <alternativeName>
        <fullName>Protein TEOSINTE BRANCHED 1-LIKE 1</fullName>
    </alternativeName>
</protein>